<keyword id="KW-0963">Cytoplasm</keyword>
<keyword id="KW-0396">Initiation factor</keyword>
<keyword id="KW-0648">Protein biosynthesis</keyword>
<gene>
    <name evidence="1" type="primary">infC</name>
    <name type="ordered locus">Mchl_1906</name>
</gene>
<evidence type="ECO:0000255" key="1">
    <source>
        <dbReference type="HAMAP-Rule" id="MF_00080"/>
    </source>
</evidence>
<feature type="chain" id="PRO_1000202541" description="Translation initiation factor IF-3">
    <location>
        <begin position="1"/>
        <end position="173"/>
    </location>
</feature>
<reference key="1">
    <citation type="submission" date="2008-12" db="EMBL/GenBank/DDBJ databases">
        <title>Complete sequence of chromosome of Methylobacterium chloromethanicum CM4.</title>
        <authorList>
            <consortium name="US DOE Joint Genome Institute"/>
            <person name="Lucas S."/>
            <person name="Copeland A."/>
            <person name="Lapidus A."/>
            <person name="Glavina del Rio T."/>
            <person name="Dalin E."/>
            <person name="Tice H."/>
            <person name="Bruce D."/>
            <person name="Goodwin L."/>
            <person name="Pitluck S."/>
            <person name="Chertkov O."/>
            <person name="Brettin T."/>
            <person name="Detter J.C."/>
            <person name="Han C."/>
            <person name="Larimer F."/>
            <person name="Land M."/>
            <person name="Hauser L."/>
            <person name="Kyrpides N."/>
            <person name="Mikhailova N."/>
            <person name="Marx C."/>
            <person name="Richardson P."/>
        </authorList>
    </citation>
    <scope>NUCLEOTIDE SEQUENCE [LARGE SCALE GENOMIC DNA]</scope>
    <source>
        <strain>CM4 / NCIMB 13688</strain>
    </source>
</reference>
<sequence length="173" mass="20038">MPAPQKDGPRANRDIRGVRDVQLIDQDGQNRGVVPFFDALAMAEEVGLDLVEIAPNSVPPVCKFLDYGRFRFNEQKKQNEARKRQKTVEVKEIKLRPGIDKHDYEVKMKAVQRFFEEGDKVKVTLRFRGREIAHQDIGLRLLERVKQETQEIAKVESEPMLEGRQMIMILAPR</sequence>
<organism>
    <name type="scientific">Methylorubrum extorquens (strain CM4 / NCIMB 13688)</name>
    <name type="common">Methylobacterium extorquens</name>
    <dbReference type="NCBI Taxonomy" id="440085"/>
    <lineage>
        <taxon>Bacteria</taxon>
        <taxon>Pseudomonadati</taxon>
        <taxon>Pseudomonadota</taxon>
        <taxon>Alphaproteobacteria</taxon>
        <taxon>Hyphomicrobiales</taxon>
        <taxon>Methylobacteriaceae</taxon>
        <taxon>Methylorubrum</taxon>
    </lineage>
</organism>
<name>IF3_METC4</name>
<comment type="function">
    <text evidence="1">IF-3 binds to the 30S ribosomal subunit and shifts the equilibrium between 70S ribosomes and their 50S and 30S subunits in favor of the free subunits, thus enhancing the availability of 30S subunits on which protein synthesis initiation begins.</text>
</comment>
<comment type="subunit">
    <text evidence="1">Monomer.</text>
</comment>
<comment type="subcellular location">
    <subcellularLocation>
        <location evidence="1">Cytoplasm</location>
    </subcellularLocation>
</comment>
<comment type="similarity">
    <text evidence="1">Belongs to the IF-3 family.</text>
</comment>
<dbReference type="EMBL" id="CP001298">
    <property type="protein sequence ID" value="ACK82769.1"/>
    <property type="molecule type" value="Genomic_DNA"/>
</dbReference>
<dbReference type="SMR" id="B7KV98"/>
<dbReference type="KEGG" id="mch:Mchl_1906"/>
<dbReference type="HOGENOM" id="CLU_054919_3_2_5"/>
<dbReference type="Proteomes" id="UP000002385">
    <property type="component" value="Chromosome"/>
</dbReference>
<dbReference type="GO" id="GO:0005829">
    <property type="term" value="C:cytosol"/>
    <property type="evidence" value="ECO:0007669"/>
    <property type="project" value="TreeGrafter"/>
</dbReference>
<dbReference type="GO" id="GO:0016020">
    <property type="term" value="C:membrane"/>
    <property type="evidence" value="ECO:0007669"/>
    <property type="project" value="TreeGrafter"/>
</dbReference>
<dbReference type="GO" id="GO:0043022">
    <property type="term" value="F:ribosome binding"/>
    <property type="evidence" value="ECO:0007669"/>
    <property type="project" value="TreeGrafter"/>
</dbReference>
<dbReference type="GO" id="GO:0003743">
    <property type="term" value="F:translation initiation factor activity"/>
    <property type="evidence" value="ECO:0007669"/>
    <property type="project" value="UniProtKB-UniRule"/>
</dbReference>
<dbReference type="GO" id="GO:0032790">
    <property type="term" value="P:ribosome disassembly"/>
    <property type="evidence" value="ECO:0007669"/>
    <property type="project" value="TreeGrafter"/>
</dbReference>
<dbReference type="FunFam" id="3.30.110.10:FF:000001">
    <property type="entry name" value="Translation initiation factor IF-3"/>
    <property type="match status" value="1"/>
</dbReference>
<dbReference type="Gene3D" id="3.30.110.10">
    <property type="entry name" value="Translation initiation factor 3 (IF-3), C-terminal domain"/>
    <property type="match status" value="1"/>
</dbReference>
<dbReference type="Gene3D" id="3.10.20.80">
    <property type="entry name" value="Translation initiation factor 3 (IF-3), N-terminal domain"/>
    <property type="match status" value="1"/>
</dbReference>
<dbReference type="HAMAP" id="MF_00080">
    <property type="entry name" value="IF_3"/>
    <property type="match status" value="1"/>
</dbReference>
<dbReference type="InterPro" id="IPR036788">
    <property type="entry name" value="T_IF-3_C_sf"/>
</dbReference>
<dbReference type="InterPro" id="IPR036787">
    <property type="entry name" value="T_IF-3_N_sf"/>
</dbReference>
<dbReference type="InterPro" id="IPR001288">
    <property type="entry name" value="Translation_initiation_fac_3"/>
</dbReference>
<dbReference type="InterPro" id="IPR019815">
    <property type="entry name" value="Translation_initiation_fac_3_C"/>
</dbReference>
<dbReference type="InterPro" id="IPR019814">
    <property type="entry name" value="Translation_initiation_fac_3_N"/>
</dbReference>
<dbReference type="NCBIfam" id="TIGR00168">
    <property type="entry name" value="infC"/>
    <property type="match status" value="1"/>
</dbReference>
<dbReference type="PANTHER" id="PTHR10938">
    <property type="entry name" value="TRANSLATION INITIATION FACTOR IF-3"/>
    <property type="match status" value="1"/>
</dbReference>
<dbReference type="PANTHER" id="PTHR10938:SF0">
    <property type="entry name" value="TRANSLATION INITIATION FACTOR IF-3, MITOCHONDRIAL"/>
    <property type="match status" value="1"/>
</dbReference>
<dbReference type="Pfam" id="PF00707">
    <property type="entry name" value="IF3_C"/>
    <property type="match status" value="1"/>
</dbReference>
<dbReference type="Pfam" id="PF05198">
    <property type="entry name" value="IF3_N"/>
    <property type="match status" value="1"/>
</dbReference>
<dbReference type="SUPFAM" id="SSF55200">
    <property type="entry name" value="Translation initiation factor IF3, C-terminal domain"/>
    <property type="match status" value="1"/>
</dbReference>
<dbReference type="SUPFAM" id="SSF54364">
    <property type="entry name" value="Translation initiation factor IF3, N-terminal domain"/>
    <property type="match status" value="1"/>
</dbReference>
<accession>B7KV98</accession>
<protein>
    <recommendedName>
        <fullName evidence="1">Translation initiation factor IF-3</fullName>
    </recommendedName>
</protein>
<proteinExistence type="inferred from homology"/>